<organism>
    <name type="scientific">Bifidobacterium longum subsp. infantis (strain ATCC 15697 / DSM 20088 / JCM 1222 / NCTC 11817 / S12)</name>
    <dbReference type="NCBI Taxonomy" id="391904"/>
    <lineage>
        <taxon>Bacteria</taxon>
        <taxon>Bacillati</taxon>
        <taxon>Actinomycetota</taxon>
        <taxon>Actinomycetes</taxon>
        <taxon>Bifidobacteriales</taxon>
        <taxon>Bifidobacteriaceae</taxon>
        <taxon>Bifidobacterium</taxon>
    </lineage>
</organism>
<name>ISPE_BIFLS</name>
<comment type="function">
    <text evidence="1">Catalyzes the phosphorylation of the position 2 hydroxy group of 4-diphosphocytidyl-2C-methyl-D-erythritol.</text>
</comment>
<comment type="catalytic activity">
    <reaction evidence="1">
        <text>4-CDP-2-C-methyl-D-erythritol + ATP = 4-CDP-2-C-methyl-D-erythritol 2-phosphate + ADP + H(+)</text>
        <dbReference type="Rhea" id="RHEA:18437"/>
        <dbReference type="ChEBI" id="CHEBI:15378"/>
        <dbReference type="ChEBI" id="CHEBI:30616"/>
        <dbReference type="ChEBI" id="CHEBI:57823"/>
        <dbReference type="ChEBI" id="CHEBI:57919"/>
        <dbReference type="ChEBI" id="CHEBI:456216"/>
        <dbReference type="EC" id="2.7.1.148"/>
    </reaction>
</comment>
<comment type="pathway">
    <text evidence="1">Isoprenoid biosynthesis; isopentenyl diphosphate biosynthesis via DXP pathway; isopentenyl diphosphate from 1-deoxy-D-xylulose 5-phosphate: step 3/6.</text>
</comment>
<comment type="similarity">
    <text evidence="1">Belongs to the GHMP kinase family. IspE subfamily.</text>
</comment>
<proteinExistence type="inferred from homology"/>
<feature type="chain" id="PRO_1000190677" description="4-diphosphocytidyl-2-C-methyl-D-erythritol kinase">
    <location>
        <begin position="1"/>
        <end position="316"/>
    </location>
</feature>
<feature type="active site" evidence="1">
    <location>
        <position position="32"/>
    </location>
</feature>
<feature type="active site" evidence="1">
    <location>
        <position position="168"/>
    </location>
</feature>
<feature type="binding site" evidence="1">
    <location>
        <begin position="126"/>
        <end position="136"/>
    </location>
    <ligand>
        <name>ATP</name>
        <dbReference type="ChEBI" id="CHEBI:30616"/>
    </ligand>
</feature>
<accession>B7GPE4</accession>
<accession>E8MPQ5</accession>
<dbReference type="EC" id="2.7.1.148" evidence="1"/>
<dbReference type="EMBL" id="CP001095">
    <property type="protein sequence ID" value="ACJ53539.1"/>
    <property type="molecule type" value="Genomic_DNA"/>
</dbReference>
<dbReference type="EMBL" id="AP010889">
    <property type="protein sequence ID" value="BAJ70134.1"/>
    <property type="molecule type" value="Genomic_DNA"/>
</dbReference>
<dbReference type="RefSeq" id="WP_012578695.1">
    <property type="nucleotide sequence ID" value="NC_011593.1"/>
</dbReference>
<dbReference type="SMR" id="B7GPE4"/>
<dbReference type="KEGG" id="bln:Blon_2485"/>
<dbReference type="KEGG" id="blon:BLIJ_2557"/>
<dbReference type="PATRIC" id="fig|391904.8.peg.2560"/>
<dbReference type="HOGENOM" id="CLU_053057_1_1_11"/>
<dbReference type="UniPathway" id="UPA00056">
    <property type="reaction ID" value="UER00094"/>
</dbReference>
<dbReference type="Proteomes" id="UP000001360">
    <property type="component" value="Chromosome"/>
</dbReference>
<dbReference type="GO" id="GO:0050515">
    <property type="term" value="F:4-(cytidine 5'-diphospho)-2-C-methyl-D-erythritol kinase activity"/>
    <property type="evidence" value="ECO:0007669"/>
    <property type="project" value="UniProtKB-UniRule"/>
</dbReference>
<dbReference type="GO" id="GO:0005524">
    <property type="term" value="F:ATP binding"/>
    <property type="evidence" value="ECO:0007669"/>
    <property type="project" value="UniProtKB-UniRule"/>
</dbReference>
<dbReference type="GO" id="GO:0019288">
    <property type="term" value="P:isopentenyl diphosphate biosynthetic process, methylerythritol 4-phosphate pathway"/>
    <property type="evidence" value="ECO:0007669"/>
    <property type="project" value="UniProtKB-UniRule"/>
</dbReference>
<dbReference type="GO" id="GO:0016114">
    <property type="term" value="P:terpenoid biosynthetic process"/>
    <property type="evidence" value="ECO:0007669"/>
    <property type="project" value="InterPro"/>
</dbReference>
<dbReference type="Gene3D" id="3.30.230.10">
    <property type="match status" value="1"/>
</dbReference>
<dbReference type="Gene3D" id="3.30.70.890">
    <property type="entry name" value="GHMP kinase, C-terminal domain"/>
    <property type="match status" value="1"/>
</dbReference>
<dbReference type="HAMAP" id="MF_00061">
    <property type="entry name" value="IspE"/>
    <property type="match status" value="1"/>
</dbReference>
<dbReference type="InterPro" id="IPR013750">
    <property type="entry name" value="GHMP_kinase_C_dom"/>
</dbReference>
<dbReference type="InterPro" id="IPR036554">
    <property type="entry name" value="GHMP_kinase_C_sf"/>
</dbReference>
<dbReference type="InterPro" id="IPR006204">
    <property type="entry name" value="GHMP_kinase_N_dom"/>
</dbReference>
<dbReference type="InterPro" id="IPR004424">
    <property type="entry name" value="IspE"/>
</dbReference>
<dbReference type="InterPro" id="IPR020568">
    <property type="entry name" value="Ribosomal_Su5_D2-typ_SF"/>
</dbReference>
<dbReference type="InterPro" id="IPR014721">
    <property type="entry name" value="Ribsml_uS5_D2-typ_fold_subgr"/>
</dbReference>
<dbReference type="PANTHER" id="PTHR43527">
    <property type="entry name" value="4-DIPHOSPHOCYTIDYL-2-C-METHYL-D-ERYTHRITOL KINASE, CHLOROPLASTIC"/>
    <property type="match status" value="1"/>
</dbReference>
<dbReference type="PANTHER" id="PTHR43527:SF2">
    <property type="entry name" value="4-DIPHOSPHOCYTIDYL-2-C-METHYL-D-ERYTHRITOL KINASE, CHLOROPLASTIC"/>
    <property type="match status" value="1"/>
</dbReference>
<dbReference type="Pfam" id="PF08544">
    <property type="entry name" value="GHMP_kinases_C"/>
    <property type="match status" value="1"/>
</dbReference>
<dbReference type="Pfam" id="PF00288">
    <property type="entry name" value="GHMP_kinases_N"/>
    <property type="match status" value="1"/>
</dbReference>
<dbReference type="PIRSF" id="PIRSF010376">
    <property type="entry name" value="IspE"/>
    <property type="match status" value="1"/>
</dbReference>
<dbReference type="SUPFAM" id="SSF55060">
    <property type="entry name" value="GHMP Kinase, C-terminal domain"/>
    <property type="match status" value="1"/>
</dbReference>
<dbReference type="SUPFAM" id="SSF54211">
    <property type="entry name" value="Ribosomal protein S5 domain 2-like"/>
    <property type="match status" value="1"/>
</dbReference>
<evidence type="ECO:0000255" key="1">
    <source>
        <dbReference type="HAMAP-Rule" id="MF_00061"/>
    </source>
</evidence>
<sequence length="316" mass="33254">MSPVISHPRPAAARHQFDELSPITITVDCPAKTNLTLEVGPAHDEWGGRHELDTIYCAIGVYDTVTATAKQPGAGFSLELEGAYLGDLASSRSDMRRNHAVLALFAMAQAAEREPDVALTITKRIPVGAGLGGGSADAAATMLAVNRLWELNWPIERLRTIAATLGADMPFCLTGGLAYGTGFGERITDIAPGSRDELALIEQGFSGEVLVGAYQSQLSTPEVYHTFDLVGAAEGDRNHLQAAAISLHPRSGQAIDAATQAGASHAFVSGSGPSVVAFAADEAAAQRIIDVWRDTAVVDRIIRAKSPAHPNIGVRQ</sequence>
<protein>
    <recommendedName>
        <fullName evidence="1">4-diphosphocytidyl-2-C-methyl-D-erythritol kinase</fullName>
        <shortName evidence="1">CMK</shortName>
        <ecNumber evidence="1">2.7.1.148</ecNumber>
    </recommendedName>
    <alternativeName>
        <fullName evidence="1">4-(cytidine-5'-diphospho)-2-C-methyl-D-erythritol kinase</fullName>
    </alternativeName>
</protein>
<gene>
    <name evidence="1" type="primary">ispE</name>
    <name type="ordered locus">Blon_2485</name>
    <name type="ordered locus">BLIJ_2557</name>
</gene>
<keyword id="KW-0067">ATP-binding</keyword>
<keyword id="KW-0414">Isoprene biosynthesis</keyword>
<keyword id="KW-0418">Kinase</keyword>
<keyword id="KW-0547">Nucleotide-binding</keyword>
<keyword id="KW-0808">Transferase</keyword>
<reference key="1">
    <citation type="journal article" date="2008" name="Proc. Natl. Acad. Sci. U.S.A.">
        <title>The genome sequence of Bifidobacterium longum subsp. infantis reveals adaptations for milk utilization within the infant microbiome.</title>
        <authorList>
            <person name="Sela D.A."/>
            <person name="Chapman J."/>
            <person name="Adeuya A."/>
            <person name="Kim J.H."/>
            <person name="Chen F."/>
            <person name="Whitehead T.R."/>
            <person name="Lapidus A."/>
            <person name="Rokhsar D.S."/>
            <person name="Lebrilla C.B."/>
            <person name="German J.B."/>
            <person name="Price N.P."/>
            <person name="Richardson P.M."/>
            <person name="Mills D.A."/>
        </authorList>
    </citation>
    <scope>NUCLEOTIDE SEQUENCE [LARGE SCALE GENOMIC DNA]</scope>
    <source>
        <strain>ATCC 15697 / DSM 20088 / JCM 1222 / NCTC 11817 / S12</strain>
    </source>
</reference>
<reference key="2">
    <citation type="journal article" date="2011" name="Nature">
        <title>Bifidobacteria can protect from enteropathogenic infection through production of acetate.</title>
        <authorList>
            <person name="Fukuda S."/>
            <person name="Toh H."/>
            <person name="Hase K."/>
            <person name="Oshima K."/>
            <person name="Nakanishi Y."/>
            <person name="Yoshimura K."/>
            <person name="Tobe T."/>
            <person name="Clarke J.M."/>
            <person name="Topping D.L."/>
            <person name="Suzuki T."/>
            <person name="Taylor T.D."/>
            <person name="Itoh K."/>
            <person name="Kikuchi J."/>
            <person name="Morita H."/>
            <person name="Hattori M."/>
            <person name="Ohno H."/>
        </authorList>
    </citation>
    <scope>NUCLEOTIDE SEQUENCE [LARGE SCALE GENOMIC DNA]</scope>
    <source>
        <strain>ATCC 15697 / DSM 20088 / JCM 1222 / NCTC 11817 / S12</strain>
    </source>
</reference>